<name>YABA_BACC4</name>
<organism>
    <name type="scientific">Bacillus cereus (strain B4264)</name>
    <dbReference type="NCBI Taxonomy" id="405532"/>
    <lineage>
        <taxon>Bacteria</taxon>
        <taxon>Bacillati</taxon>
        <taxon>Bacillota</taxon>
        <taxon>Bacilli</taxon>
        <taxon>Bacillales</taxon>
        <taxon>Bacillaceae</taxon>
        <taxon>Bacillus</taxon>
        <taxon>Bacillus cereus group</taxon>
    </lineage>
</organism>
<proteinExistence type="inferred from homology"/>
<sequence length="116" mass="13810">MEKKDIFESVSSMEEQIGHLYKQLGELKQHLAELLEENQHIKMENNNLRHRFEEVQNKEKQKTQKRKEVKPKTDIGEGYDNLARLYQEGFHICNLHYGSVRKEGDCLFCLSFLNKK</sequence>
<reference key="1">
    <citation type="submission" date="2008-10" db="EMBL/GenBank/DDBJ databases">
        <title>Genome sequence of Bacillus cereus B4264.</title>
        <authorList>
            <person name="Dodson R.J."/>
            <person name="Durkin A.S."/>
            <person name="Rosovitz M.J."/>
            <person name="Rasko D.A."/>
            <person name="Hoffmaster A."/>
            <person name="Ravel J."/>
            <person name="Sutton G."/>
        </authorList>
    </citation>
    <scope>NUCLEOTIDE SEQUENCE [LARGE SCALE GENOMIC DNA]</scope>
    <source>
        <strain>B4264</strain>
    </source>
</reference>
<keyword id="KW-0963">Cytoplasm</keyword>
<keyword id="KW-0235">DNA replication</keyword>
<keyword id="KW-0236">DNA replication inhibitor</keyword>
<keyword id="KW-0479">Metal-binding</keyword>
<keyword id="KW-0862">Zinc</keyword>
<protein>
    <recommendedName>
        <fullName evidence="1">Replication initiation control protein YabA</fullName>
    </recommendedName>
</protein>
<gene>
    <name evidence="1" type="primary">yabA</name>
    <name type="ordered locus">BCB4264_A0038</name>
</gene>
<accession>B7HIK1</accession>
<evidence type="ECO:0000255" key="1">
    <source>
        <dbReference type="HAMAP-Rule" id="MF_01159"/>
    </source>
</evidence>
<evidence type="ECO:0000256" key="2">
    <source>
        <dbReference type="SAM" id="MobiDB-lite"/>
    </source>
</evidence>
<feature type="chain" id="PRO_1000137831" description="Replication initiation control protein YabA">
    <location>
        <begin position="1"/>
        <end position="116"/>
    </location>
</feature>
<feature type="region of interest" description="Disordered" evidence="2">
    <location>
        <begin position="52"/>
        <end position="73"/>
    </location>
</feature>
<feature type="compositionally biased region" description="Basic and acidic residues" evidence="2">
    <location>
        <begin position="52"/>
        <end position="62"/>
    </location>
</feature>
<feature type="binding site" evidence="1">
    <location>
        <position position="91"/>
    </location>
    <ligand>
        <name>Zn(2+)</name>
        <dbReference type="ChEBI" id="CHEBI:29105"/>
    </ligand>
</feature>
<feature type="binding site" evidence="1">
    <location>
        <position position="93"/>
    </location>
    <ligand>
        <name>Zn(2+)</name>
        <dbReference type="ChEBI" id="CHEBI:29105"/>
    </ligand>
</feature>
<feature type="binding site" evidence="1">
    <location>
        <position position="106"/>
    </location>
    <ligand>
        <name>Zn(2+)</name>
        <dbReference type="ChEBI" id="CHEBI:29105"/>
    </ligand>
</feature>
<feature type="binding site" evidence="1">
    <location>
        <position position="109"/>
    </location>
    <ligand>
        <name>Zn(2+)</name>
        <dbReference type="ChEBI" id="CHEBI:29105"/>
    </ligand>
</feature>
<dbReference type="EMBL" id="CP001176">
    <property type="protein sequence ID" value="ACK59739.1"/>
    <property type="molecule type" value="Genomic_DNA"/>
</dbReference>
<dbReference type="RefSeq" id="WP_000412063.1">
    <property type="nucleotide sequence ID" value="NZ_VEHB01000020.1"/>
</dbReference>
<dbReference type="SMR" id="B7HIK1"/>
<dbReference type="GeneID" id="72446834"/>
<dbReference type="KEGG" id="bcb:BCB4264_A0038"/>
<dbReference type="HOGENOM" id="CLU_157169_0_0_9"/>
<dbReference type="Proteomes" id="UP000007096">
    <property type="component" value="Chromosome"/>
</dbReference>
<dbReference type="GO" id="GO:0009295">
    <property type="term" value="C:nucleoid"/>
    <property type="evidence" value="ECO:0007669"/>
    <property type="project" value="UniProtKB-SubCell"/>
</dbReference>
<dbReference type="GO" id="GO:0006260">
    <property type="term" value="P:DNA replication"/>
    <property type="evidence" value="ECO:0007669"/>
    <property type="project" value="UniProtKB-UniRule"/>
</dbReference>
<dbReference type="Gene3D" id="1.20.5.1160">
    <property type="entry name" value="Vasodilator-stimulated phosphoprotein"/>
    <property type="match status" value="1"/>
</dbReference>
<dbReference type="HAMAP" id="MF_01159">
    <property type="entry name" value="YabA"/>
    <property type="match status" value="1"/>
</dbReference>
<dbReference type="InterPro" id="IPR010377">
    <property type="entry name" value="YabA"/>
</dbReference>
<dbReference type="NCBIfam" id="NF009644">
    <property type="entry name" value="PRK13169.1-5"/>
    <property type="match status" value="1"/>
</dbReference>
<dbReference type="Pfam" id="PF06156">
    <property type="entry name" value="YabA"/>
    <property type="match status" value="1"/>
</dbReference>
<dbReference type="PIRSF" id="PIRSF021439">
    <property type="entry name" value="DUF972"/>
    <property type="match status" value="1"/>
</dbReference>
<comment type="function">
    <text evidence="1">Involved in control of chromosome replication initiation. Inhibits the cooperative binding of DnaA to the oriC region, thus negatively regulating initiation of chromosome replication. Inhibits the ability of DnaA-ATP to form a helix on DNA; does not disassemble preformed DnaA-DNA helices. Decreases the residence time of DnaA on the chromosome at its binding sites (oriC, replication forks and promoter-binding sites). Tethers DnaA to the replication machinery via the DNA polymerase beta sliding clamp subunit (dnaN). Associates with oriC and other DnaA targets on the chromosome in a DnaA-dependent manner.</text>
</comment>
<comment type="cofactor">
    <cofactor evidence="1">
        <name>Zn(2+)</name>
        <dbReference type="ChEBI" id="CHEBI:29105"/>
    </cofactor>
    <text evidence="1">Binds 1 zinc ion per subunit.</text>
</comment>
<comment type="subunit">
    <text evidence="1">Homotetramer. Interacts with both DnaA and DnaN, acting as a bridge between these two proteins.</text>
</comment>
<comment type="subcellular location">
    <subcellularLocation>
        <location evidence="1">Cytoplasm</location>
        <location evidence="1">Nucleoid</location>
    </subcellularLocation>
    <text evidence="1">Localizes in tight foci, which correspond to the replisome at mid-cell throughout the cell cycle.</text>
</comment>
<comment type="similarity">
    <text evidence="1">Belongs to the YabA family.</text>
</comment>